<organism>
    <name type="scientific">Bacillus cereus (strain ZK / E33L)</name>
    <dbReference type="NCBI Taxonomy" id="288681"/>
    <lineage>
        <taxon>Bacteria</taxon>
        <taxon>Bacillati</taxon>
        <taxon>Bacillota</taxon>
        <taxon>Bacilli</taxon>
        <taxon>Bacillales</taxon>
        <taxon>Bacillaceae</taxon>
        <taxon>Bacillus</taxon>
        <taxon>Bacillus cereus group</taxon>
    </lineage>
</organism>
<proteinExistence type="inferred from homology"/>
<name>PNP_BACCZ</name>
<comment type="function">
    <text evidence="1">Involved in mRNA degradation. Catalyzes the phosphorolysis of single-stranded polyribonucleotides processively in the 3'- to 5'-direction.</text>
</comment>
<comment type="catalytic activity">
    <reaction evidence="1">
        <text>RNA(n+1) + phosphate = RNA(n) + a ribonucleoside 5'-diphosphate</text>
        <dbReference type="Rhea" id="RHEA:22096"/>
        <dbReference type="Rhea" id="RHEA-COMP:14527"/>
        <dbReference type="Rhea" id="RHEA-COMP:17342"/>
        <dbReference type="ChEBI" id="CHEBI:43474"/>
        <dbReference type="ChEBI" id="CHEBI:57930"/>
        <dbReference type="ChEBI" id="CHEBI:140395"/>
        <dbReference type="EC" id="2.7.7.8"/>
    </reaction>
</comment>
<comment type="cofactor">
    <cofactor evidence="1">
        <name>Mg(2+)</name>
        <dbReference type="ChEBI" id="CHEBI:18420"/>
    </cofactor>
</comment>
<comment type="subcellular location">
    <subcellularLocation>
        <location evidence="1">Cytoplasm</location>
    </subcellularLocation>
</comment>
<comment type="similarity">
    <text evidence="1">Belongs to the polyribonucleotide nucleotidyltransferase family.</text>
</comment>
<sequence>MSQEKQVFSIDLAGRQLTVETGQLAKQANGAVLVRYGDTAVLSTATASKEAKNVDFFPLTVNYEERLYAVGKIPGGFIKREGRPSEKAILASRLIDRPIRPLFADGFRNEVQVVSIVMSVDQDCSSEMAAMLGSSLALSISDIPFEGPIAGATVGRINGEFVINPTVEQQEQSDIHLVVAGTKDAINMVEAGADQVPEETMLEAIMFGHDEIKRLIAFQEEIVQAVGKEKSEVKLYEVDADLNQAVREMAEKDMHSAIQVHEKHAREDAINEVKKRVIEHYEAQEADADTLGQVNEILYKIVKEEVRRLITVEKIRPDGRKGDEIRPLASEVGILSRTHGSGLFTRGQTQALSICTLGALGDVQILDGLGVEESKRFMHHYNFPSFSVGETRPMRGPGRREIGHGALGERALEPVIPSEKDFPYTVRLVSEVLESNGSTSQASICGSTLAMMDAGVPLKAPVAGIAMGLVKTGEHYTILSDIQGMEDHLGDMDFKVAGTAHGVTALQMDIKIDGLSREILEEALQQAKVGRVHILNHMLSVIAEPRTELSAYAPKIITMTINPDKIRDVIGPSGKQINKIIEETGVKIDIEQDGTVFISSINQEMNDKAKKIIEDIVREVQVGEIYEGKVKRVEKFGAFVELFSGKDGLVHISELALERVGKVEDVVKIGDVITVKVIEIDKQGRVNLSRKVLLKEEQEKEAAKEENKQEQQ</sequence>
<gene>
    <name evidence="1" type="primary">pnp</name>
    <name type="ordered locus">BCE33L3566</name>
</gene>
<accession>Q636L9</accession>
<protein>
    <recommendedName>
        <fullName evidence="1">Polyribonucleotide nucleotidyltransferase</fullName>
        <ecNumber evidence="1">2.7.7.8</ecNumber>
    </recommendedName>
    <alternativeName>
        <fullName evidence="1">Polynucleotide phosphorylase</fullName>
        <shortName evidence="1">PNPase</shortName>
    </alternativeName>
</protein>
<reference key="1">
    <citation type="journal article" date="2006" name="J. Bacteriol.">
        <title>Pathogenomic sequence analysis of Bacillus cereus and Bacillus thuringiensis isolates closely related to Bacillus anthracis.</title>
        <authorList>
            <person name="Han C.S."/>
            <person name="Xie G."/>
            <person name="Challacombe J.F."/>
            <person name="Altherr M.R."/>
            <person name="Bhotika S.S."/>
            <person name="Bruce D."/>
            <person name="Campbell C.S."/>
            <person name="Campbell M.L."/>
            <person name="Chen J."/>
            <person name="Chertkov O."/>
            <person name="Cleland C."/>
            <person name="Dimitrijevic M."/>
            <person name="Doggett N.A."/>
            <person name="Fawcett J.J."/>
            <person name="Glavina T."/>
            <person name="Goodwin L.A."/>
            <person name="Hill K.K."/>
            <person name="Hitchcock P."/>
            <person name="Jackson P.J."/>
            <person name="Keim P."/>
            <person name="Kewalramani A.R."/>
            <person name="Longmire J."/>
            <person name="Lucas S."/>
            <person name="Malfatti S."/>
            <person name="McMurry K."/>
            <person name="Meincke L.J."/>
            <person name="Misra M."/>
            <person name="Moseman B.L."/>
            <person name="Mundt M."/>
            <person name="Munk A.C."/>
            <person name="Okinaka R.T."/>
            <person name="Parson-Quintana B."/>
            <person name="Reilly L.P."/>
            <person name="Richardson P."/>
            <person name="Robinson D.L."/>
            <person name="Rubin E."/>
            <person name="Saunders E."/>
            <person name="Tapia R."/>
            <person name="Tesmer J.G."/>
            <person name="Thayer N."/>
            <person name="Thompson L.S."/>
            <person name="Tice H."/>
            <person name="Ticknor L.O."/>
            <person name="Wills P.L."/>
            <person name="Brettin T.S."/>
            <person name="Gilna P."/>
        </authorList>
    </citation>
    <scope>NUCLEOTIDE SEQUENCE [LARGE SCALE GENOMIC DNA]</scope>
    <source>
        <strain>ZK / E33L</strain>
    </source>
</reference>
<feature type="chain" id="PRO_0000329514" description="Polyribonucleotide nucleotidyltransferase">
    <location>
        <begin position="1"/>
        <end position="712"/>
    </location>
</feature>
<feature type="domain" description="KH" evidence="1">
    <location>
        <begin position="554"/>
        <end position="613"/>
    </location>
</feature>
<feature type="domain" description="S1 motif" evidence="1">
    <location>
        <begin position="623"/>
        <end position="691"/>
    </location>
</feature>
<feature type="binding site" evidence="1">
    <location>
        <position position="487"/>
    </location>
    <ligand>
        <name>Mg(2+)</name>
        <dbReference type="ChEBI" id="CHEBI:18420"/>
    </ligand>
</feature>
<feature type="binding site" evidence="1">
    <location>
        <position position="493"/>
    </location>
    <ligand>
        <name>Mg(2+)</name>
        <dbReference type="ChEBI" id="CHEBI:18420"/>
    </ligand>
</feature>
<dbReference type="EC" id="2.7.7.8" evidence="1"/>
<dbReference type="EMBL" id="CP000001">
    <property type="protein sequence ID" value="AAU16701.1"/>
    <property type="molecule type" value="Genomic_DNA"/>
</dbReference>
<dbReference type="RefSeq" id="WP_000076750.1">
    <property type="nucleotide sequence ID" value="NZ_CP009968.1"/>
</dbReference>
<dbReference type="SMR" id="Q636L9"/>
<dbReference type="GeneID" id="93007305"/>
<dbReference type="KEGG" id="bcz:BCE33L3566"/>
<dbReference type="PATRIC" id="fig|288681.22.peg.1845"/>
<dbReference type="Proteomes" id="UP000002612">
    <property type="component" value="Chromosome"/>
</dbReference>
<dbReference type="GO" id="GO:0005829">
    <property type="term" value="C:cytosol"/>
    <property type="evidence" value="ECO:0007669"/>
    <property type="project" value="TreeGrafter"/>
</dbReference>
<dbReference type="GO" id="GO:0000175">
    <property type="term" value="F:3'-5'-RNA exonuclease activity"/>
    <property type="evidence" value="ECO:0007669"/>
    <property type="project" value="TreeGrafter"/>
</dbReference>
<dbReference type="GO" id="GO:0000287">
    <property type="term" value="F:magnesium ion binding"/>
    <property type="evidence" value="ECO:0007669"/>
    <property type="project" value="UniProtKB-UniRule"/>
</dbReference>
<dbReference type="GO" id="GO:0004654">
    <property type="term" value="F:polyribonucleotide nucleotidyltransferase activity"/>
    <property type="evidence" value="ECO:0007669"/>
    <property type="project" value="UniProtKB-UniRule"/>
</dbReference>
<dbReference type="GO" id="GO:0003723">
    <property type="term" value="F:RNA binding"/>
    <property type="evidence" value="ECO:0007669"/>
    <property type="project" value="UniProtKB-UniRule"/>
</dbReference>
<dbReference type="GO" id="GO:0006402">
    <property type="term" value="P:mRNA catabolic process"/>
    <property type="evidence" value="ECO:0007669"/>
    <property type="project" value="UniProtKB-UniRule"/>
</dbReference>
<dbReference type="GO" id="GO:0006396">
    <property type="term" value="P:RNA processing"/>
    <property type="evidence" value="ECO:0007669"/>
    <property type="project" value="InterPro"/>
</dbReference>
<dbReference type="CDD" id="cd02393">
    <property type="entry name" value="KH-I_PNPase"/>
    <property type="match status" value="1"/>
</dbReference>
<dbReference type="CDD" id="cd11363">
    <property type="entry name" value="RNase_PH_PNPase_1"/>
    <property type="match status" value="1"/>
</dbReference>
<dbReference type="CDD" id="cd11364">
    <property type="entry name" value="RNase_PH_PNPase_2"/>
    <property type="match status" value="1"/>
</dbReference>
<dbReference type="CDD" id="cd04472">
    <property type="entry name" value="S1_PNPase"/>
    <property type="match status" value="1"/>
</dbReference>
<dbReference type="FunFam" id="2.40.50.140:FF:000023">
    <property type="entry name" value="Polyribonucleotide nucleotidyltransferase"/>
    <property type="match status" value="1"/>
</dbReference>
<dbReference type="FunFam" id="3.30.1370.10:FF:000001">
    <property type="entry name" value="Polyribonucleotide nucleotidyltransferase"/>
    <property type="match status" value="1"/>
</dbReference>
<dbReference type="FunFam" id="3.30.230.70:FF:000001">
    <property type="entry name" value="Polyribonucleotide nucleotidyltransferase"/>
    <property type="match status" value="1"/>
</dbReference>
<dbReference type="FunFam" id="3.30.230.70:FF:000002">
    <property type="entry name" value="Polyribonucleotide nucleotidyltransferase"/>
    <property type="match status" value="1"/>
</dbReference>
<dbReference type="Gene3D" id="3.30.230.70">
    <property type="entry name" value="GHMP Kinase, N-terminal domain"/>
    <property type="match status" value="2"/>
</dbReference>
<dbReference type="Gene3D" id="3.30.1370.10">
    <property type="entry name" value="K Homology domain, type 1"/>
    <property type="match status" value="1"/>
</dbReference>
<dbReference type="Gene3D" id="2.40.50.140">
    <property type="entry name" value="Nucleic acid-binding proteins"/>
    <property type="match status" value="1"/>
</dbReference>
<dbReference type="HAMAP" id="MF_01595">
    <property type="entry name" value="PNPase"/>
    <property type="match status" value="1"/>
</dbReference>
<dbReference type="InterPro" id="IPR001247">
    <property type="entry name" value="ExoRNase_PH_dom1"/>
</dbReference>
<dbReference type="InterPro" id="IPR015847">
    <property type="entry name" value="ExoRNase_PH_dom2"/>
</dbReference>
<dbReference type="InterPro" id="IPR036345">
    <property type="entry name" value="ExoRNase_PH_dom2_sf"/>
</dbReference>
<dbReference type="InterPro" id="IPR004087">
    <property type="entry name" value="KH_dom"/>
</dbReference>
<dbReference type="InterPro" id="IPR004088">
    <property type="entry name" value="KH_dom_type_1"/>
</dbReference>
<dbReference type="InterPro" id="IPR036612">
    <property type="entry name" value="KH_dom_type_1_sf"/>
</dbReference>
<dbReference type="InterPro" id="IPR012340">
    <property type="entry name" value="NA-bd_OB-fold"/>
</dbReference>
<dbReference type="InterPro" id="IPR012162">
    <property type="entry name" value="PNPase"/>
</dbReference>
<dbReference type="InterPro" id="IPR027408">
    <property type="entry name" value="PNPase/RNase_PH_dom_sf"/>
</dbReference>
<dbReference type="InterPro" id="IPR015848">
    <property type="entry name" value="PNPase_PH_RNA-bd_bac/org-type"/>
</dbReference>
<dbReference type="InterPro" id="IPR020568">
    <property type="entry name" value="Ribosomal_Su5_D2-typ_SF"/>
</dbReference>
<dbReference type="InterPro" id="IPR003029">
    <property type="entry name" value="S1_domain"/>
</dbReference>
<dbReference type="NCBIfam" id="TIGR03591">
    <property type="entry name" value="polynuc_phos"/>
    <property type="match status" value="1"/>
</dbReference>
<dbReference type="NCBIfam" id="NF008805">
    <property type="entry name" value="PRK11824.1"/>
    <property type="match status" value="1"/>
</dbReference>
<dbReference type="PANTHER" id="PTHR11252">
    <property type="entry name" value="POLYRIBONUCLEOTIDE NUCLEOTIDYLTRANSFERASE"/>
    <property type="match status" value="1"/>
</dbReference>
<dbReference type="PANTHER" id="PTHR11252:SF0">
    <property type="entry name" value="POLYRIBONUCLEOTIDE NUCLEOTIDYLTRANSFERASE 1, MITOCHONDRIAL"/>
    <property type="match status" value="1"/>
</dbReference>
<dbReference type="Pfam" id="PF00013">
    <property type="entry name" value="KH_1"/>
    <property type="match status" value="1"/>
</dbReference>
<dbReference type="Pfam" id="PF03726">
    <property type="entry name" value="PNPase"/>
    <property type="match status" value="1"/>
</dbReference>
<dbReference type="Pfam" id="PF01138">
    <property type="entry name" value="RNase_PH"/>
    <property type="match status" value="2"/>
</dbReference>
<dbReference type="Pfam" id="PF03725">
    <property type="entry name" value="RNase_PH_C"/>
    <property type="match status" value="2"/>
</dbReference>
<dbReference type="Pfam" id="PF00575">
    <property type="entry name" value="S1"/>
    <property type="match status" value="1"/>
</dbReference>
<dbReference type="PIRSF" id="PIRSF005499">
    <property type="entry name" value="PNPase"/>
    <property type="match status" value="1"/>
</dbReference>
<dbReference type="SMART" id="SM00322">
    <property type="entry name" value="KH"/>
    <property type="match status" value="1"/>
</dbReference>
<dbReference type="SMART" id="SM00316">
    <property type="entry name" value="S1"/>
    <property type="match status" value="1"/>
</dbReference>
<dbReference type="SUPFAM" id="SSF54791">
    <property type="entry name" value="Eukaryotic type KH-domain (KH-domain type I)"/>
    <property type="match status" value="1"/>
</dbReference>
<dbReference type="SUPFAM" id="SSF50249">
    <property type="entry name" value="Nucleic acid-binding proteins"/>
    <property type="match status" value="1"/>
</dbReference>
<dbReference type="SUPFAM" id="SSF55666">
    <property type="entry name" value="Ribonuclease PH domain 2-like"/>
    <property type="match status" value="2"/>
</dbReference>
<dbReference type="SUPFAM" id="SSF54211">
    <property type="entry name" value="Ribosomal protein S5 domain 2-like"/>
    <property type="match status" value="2"/>
</dbReference>
<dbReference type="PROSITE" id="PS50084">
    <property type="entry name" value="KH_TYPE_1"/>
    <property type="match status" value="1"/>
</dbReference>
<dbReference type="PROSITE" id="PS50126">
    <property type="entry name" value="S1"/>
    <property type="match status" value="1"/>
</dbReference>
<evidence type="ECO:0000255" key="1">
    <source>
        <dbReference type="HAMAP-Rule" id="MF_01595"/>
    </source>
</evidence>
<keyword id="KW-0963">Cytoplasm</keyword>
<keyword id="KW-0460">Magnesium</keyword>
<keyword id="KW-0479">Metal-binding</keyword>
<keyword id="KW-0548">Nucleotidyltransferase</keyword>
<keyword id="KW-0694">RNA-binding</keyword>
<keyword id="KW-0808">Transferase</keyword>